<organism>
    <name type="scientific">Neorickettsia risticii (strain Illinois)</name>
    <dbReference type="NCBI Taxonomy" id="434131"/>
    <lineage>
        <taxon>Bacteria</taxon>
        <taxon>Pseudomonadati</taxon>
        <taxon>Pseudomonadota</taxon>
        <taxon>Alphaproteobacteria</taxon>
        <taxon>Rickettsiales</taxon>
        <taxon>Anaplasmataceae</taxon>
        <taxon>Neorickettsia</taxon>
    </lineage>
</organism>
<gene>
    <name evidence="1" type="primary">ftsH</name>
    <name type="ordered locus">NRI_0402</name>
</gene>
<dbReference type="EC" id="3.4.24.-" evidence="1"/>
<dbReference type="EMBL" id="CP001431">
    <property type="protein sequence ID" value="ACT69330.1"/>
    <property type="molecule type" value="Genomic_DNA"/>
</dbReference>
<dbReference type="RefSeq" id="WP_015816219.1">
    <property type="nucleotide sequence ID" value="NC_013009.1"/>
</dbReference>
<dbReference type="SMR" id="C6V4R9"/>
<dbReference type="STRING" id="434131.NRI_0402"/>
<dbReference type="KEGG" id="nri:NRI_0402"/>
<dbReference type="eggNOG" id="COG0465">
    <property type="taxonomic scope" value="Bacteria"/>
</dbReference>
<dbReference type="HOGENOM" id="CLU_000688_16_2_5"/>
<dbReference type="OrthoDB" id="9809379at2"/>
<dbReference type="Proteomes" id="UP000001627">
    <property type="component" value="Chromosome"/>
</dbReference>
<dbReference type="GO" id="GO:0005886">
    <property type="term" value="C:plasma membrane"/>
    <property type="evidence" value="ECO:0007669"/>
    <property type="project" value="UniProtKB-SubCell"/>
</dbReference>
<dbReference type="GO" id="GO:0005524">
    <property type="term" value="F:ATP binding"/>
    <property type="evidence" value="ECO:0007669"/>
    <property type="project" value="UniProtKB-UniRule"/>
</dbReference>
<dbReference type="GO" id="GO:0016887">
    <property type="term" value="F:ATP hydrolysis activity"/>
    <property type="evidence" value="ECO:0007669"/>
    <property type="project" value="UniProtKB-UniRule"/>
</dbReference>
<dbReference type="GO" id="GO:0004176">
    <property type="term" value="F:ATP-dependent peptidase activity"/>
    <property type="evidence" value="ECO:0007669"/>
    <property type="project" value="InterPro"/>
</dbReference>
<dbReference type="GO" id="GO:0004222">
    <property type="term" value="F:metalloendopeptidase activity"/>
    <property type="evidence" value="ECO:0007669"/>
    <property type="project" value="InterPro"/>
</dbReference>
<dbReference type="GO" id="GO:0008270">
    <property type="term" value="F:zinc ion binding"/>
    <property type="evidence" value="ECO:0007669"/>
    <property type="project" value="UniProtKB-UniRule"/>
</dbReference>
<dbReference type="GO" id="GO:0030163">
    <property type="term" value="P:protein catabolic process"/>
    <property type="evidence" value="ECO:0007669"/>
    <property type="project" value="UniProtKB-UniRule"/>
</dbReference>
<dbReference type="GO" id="GO:0006508">
    <property type="term" value="P:proteolysis"/>
    <property type="evidence" value="ECO:0007669"/>
    <property type="project" value="UniProtKB-KW"/>
</dbReference>
<dbReference type="CDD" id="cd19501">
    <property type="entry name" value="RecA-like_FtsH"/>
    <property type="match status" value="1"/>
</dbReference>
<dbReference type="FunFam" id="1.10.8.60:FF:000001">
    <property type="entry name" value="ATP-dependent zinc metalloprotease FtsH"/>
    <property type="match status" value="1"/>
</dbReference>
<dbReference type="FunFam" id="1.20.58.760:FF:000001">
    <property type="entry name" value="ATP-dependent zinc metalloprotease FtsH"/>
    <property type="match status" value="1"/>
</dbReference>
<dbReference type="FunFam" id="3.40.50.300:FF:000001">
    <property type="entry name" value="ATP-dependent zinc metalloprotease FtsH"/>
    <property type="match status" value="1"/>
</dbReference>
<dbReference type="Gene3D" id="1.10.8.60">
    <property type="match status" value="1"/>
</dbReference>
<dbReference type="Gene3D" id="3.30.720.210">
    <property type="match status" value="1"/>
</dbReference>
<dbReference type="Gene3D" id="3.40.50.300">
    <property type="entry name" value="P-loop containing nucleotide triphosphate hydrolases"/>
    <property type="match status" value="1"/>
</dbReference>
<dbReference type="Gene3D" id="1.20.58.760">
    <property type="entry name" value="Peptidase M41"/>
    <property type="match status" value="1"/>
</dbReference>
<dbReference type="HAMAP" id="MF_01458">
    <property type="entry name" value="FtsH"/>
    <property type="match status" value="1"/>
</dbReference>
<dbReference type="InterPro" id="IPR003593">
    <property type="entry name" value="AAA+_ATPase"/>
</dbReference>
<dbReference type="InterPro" id="IPR041569">
    <property type="entry name" value="AAA_lid_3"/>
</dbReference>
<dbReference type="InterPro" id="IPR003959">
    <property type="entry name" value="ATPase_AAA_core"/>
</dbReference>
<dbReference type="InterPro" id="IPR003960">
    <property type="entry name" value="ATPase_AAA_CS"/>
</dbReference>
<dbReference type="InterPro" id="IPR005936">
    <property type="entry name" value="FtsH"/>
</dbReference>
<dbReference type="InterPro" id="IPR027417">
    <property type="entry name" value="P-loop_NTPase"/>
</dbReference>
<dbReference type="InterPro" id="IPR011546">
    <property type="entry name" value="Pept_M41_FtsH_extracell"/>
</dbReference>
<dbReference type="InterPro" id="IPR000642">
    <property type="entry name" value="Peptidase_M41"/>
</dbReference>
<dbReference type="InterPro" id="IPR037219">
    <property type="entry name" value="Peptidase_M41-like"/>
</dbReference>
<dbReference type="NCBIfam" id="TIGR01241">
    <property type="entry name" value="FtsH_fam"/>
    <property type="match status" value="1"/>
</dbReference>
<dbReference type="PANTHER" id="PTHR23076:SF97">
    <property type="entry name" value="ATP-DEPENDENT ZINC METALLOPROTEASE YME1L1"/>
    <property type="match status" value="1"/>
</dbReference>
<dbReference type="PANTHER" id="PTHR23076">
    <property type="entry name" value="METALLOPROTEASE M41 FTSH"/>
    <property type="match status" value="1"/>
</dbReference>
<dbReference type="Pfam" id="PF00004">
    <property type="entry name" value="AAA"/>
    <property type="match status" value="1"/>
</dbReference>
<dbReference type="Pfam" id="PF17862">
    <property type="entry name" value="AAA_lid_3"/>
    <property type="match status" value="1"/>
</dbReference>
<dbReference type="Pfam" id="PF06480">
    <property type="entry name" value="FtsH_ext"/>
    <property type="match status" value="1"/>
</dbReference>
<dbReference type="Pfam" id="PF01434">
    <property type="entry name" value="Peptidase_M41"/>
    <property type="match status" value="1"/>
</dbReference>
<dbReference type="SMART" id="SM00382">
    <property type="entry name" value="AAA"/>
    <property type="match status" value="1"/>
</dbReference>
<dbReference type="SUPFAM" id="SSF140990">
    <property type="entry name" value="FtsH protease domain-like"/>
    <property type="match status" value="1"/>
</dbReference>
<dbReference type="SUPFAM" id="SSF52540">
    <property type="entry name" value="P-loop containing nucleoside triphosphate hydrolases"/>
    <property type="match status" value="1"/>
</dbReference>
<dbReference type="PROSITE" id="PS00674">
    <property type="entry name" value="AAA"/>
    <property type="match status" value="1"/>
</dbReference>
<feature type="chain" id="PRO_0000400364" description="ATP-dependent zinc metalloprotease FtsH">
    <location>
        <begin position="1"/>
        <end position="636"/>
    </location>
</feature>
<feature type="topological domain" description="Cytoplasmic" evidence="1">
    <location>
        <begin position="1"/>
        <end position="12"/>
    </location>
</feature>
<feature type="transmembrane region" description="Helical" evidence="1">
    <location>
        <begin position="13"/>
        <end position="33"/>
    </location>
</feature>
<feature type="topological domain" description="Periplasmic" evidence="1">
    <location>
        <begin position="34"/>
        <end position="104"/>
    </location>
</feature>
<feature type="transmembrane region" description="Helical" evidence="1">
    <location>
        <begin position="105"/>
        <end position="125"/>
    </location>
</feature>
<feature type="topological domain" description="Cytoplasmic" evidence="1">
    <location>
        <begin position="126"/>
        <end position="636"/>
    </location>
</feature>
<feature type="active site" evidence="1">
    <location>
        <position position="420"/>
    </location>
</feature>
<feature type="binding site" evidence="1">
    <location>
        <begin position="197"/>
        <end position="204"/>
    </location>
    <ligand>
        <name>ATP</name>
        <dbReference type="ChEBI" id="CHEBI:30616"/>
    </ligand>
</feature>
<feature type="binding site" evidence="1">
    <location>
        <position position="419"/>
    </location>
    <ligand>
        <name>Zn(2+)</name>
        <dbReference type="ChEBI" id="CHEBI:29105"/>
        <note>catalytic</note>
    </ligand>
</feature>
<feature type="binding site" evidence="1">
    <location>
        <position position="423"/>
    </location>
    <ligand>
        <name>Zn(2+)</name>
        <dbReference type="ChEBI" id="CHEBI:29105"/>
        <note>catalytic</note>
    </ligand>
</feature>
<feature type="binding site" evidence="1">
    <location>
        <position position="497"/>
    </location>
    <ligand>
        <name>Zn(2+)</name>
        <dbReference type="ChEBI" id="CHEBI:29105"/>
        <note>catalytic</note>
    </ligand>
</feature>
<proteinExistence type="inferred from homology"/>
<comment type="function">
    <text evidence="1">Acts as a processive, ATP-dependent zinc metallopeptidase for both cytoplasmic and membrane proteins. Plays a role in the quality control of integral membrane proteins.</text>
</comment>
<comment type="cofactor">
    <cofactor evidence="1">
        <name>Zn(2+)</name>
        <dbReference type="ChEBI" id="CHEBI:29105"/>
    </cofactor>
    <text evidence="1">Binds 1 zinc ion per subunit.</text>
</comment>
<comment type="subunit">
    <text evidence="1">Homohexamer.</text>
</comment>
<comment type="subcellular location">
    <subcellularLocation>
        <location evidence="1">Cell inner membrane</location>
        <topology evidence="1">Multi-pass membrane protein</topology>
        <orientation evidence="1">Cytoplasmic side</orientation>
    </subcellularLocation>
</comment>
<comment type="similarity">
    <text evidence="1">In the central section; belongs to the AAA ATPase family.</text>
</comment>
<comment type="similarity">
    <text evidence="1">In the C-terminal section; belongs to the peptidase M41 family.</text>
</comment>
<keyword id="KW-0067">ATP-binding</keyword>
<keyword id="KW-0997">Cell inner membrane</keyword>
<keyword id="KW-1003">Cell membrane</keyword>
<keyword id="KW-0378">Hydrolase</keyword>
<keyword id="KW-0472">Membrane</keyword>
<keyword id="KW-0479">Metal-binding</keyword>
<keyword id="KW-0482">Metalloprotease</keyword>
<keyword id="KW-0547">Nucleotide-binding</keyword>
<keyword id="KW-0645">Protease</keyword>
<keyword id="KW-0812">Transmembrane</keyword>
<keyword id="KW-1133">Transmembrane helix</keyword>
<keyword id="KW-0862">Zinc</keyword>
<accession>C6V4R9</accession>
<name>FTSH_NEORI</name>
<sequence length="636" mass="70267">MKKLLENLSLWMGIIILVTLLFGQVALNFGFGIRNEKIQFSEFLDLVEKGEVQKIVIEGYDISGVLKSGTRFYTKATQYTELIPLLRKNNVDFQVASGDSFLGLLFNILISWFPMLLLIGVWIFFMKQMQAGGNKTMTFGKSKARLLSDRSNKVTFHDVAGIDEAKEELAEIVEFLREPKKFQKLGGKIPKGCLLIGPPGTGKTLLAKAIAGEAKVPFFSISGSDFVEMFVGVGASRVRDMFEQGKKNAPCLIFIDEIDAVGRHRGVGFGGGNDEREQTLNQLLVEMDGFEANEGVIIIAATNRPDVLDPALLRPGRFDRQITISIPDIAGRQKILEVHLKKIPTAPNVEVSIIARGTPGFSGADLANLVNESALIAARRNKKVVTNEDFEYARDKILMGMERKSLVMREEEKLLTAYHEAGHAVTSLKLEASDPIHKATIIPRGRALGLVMRLPEHDRVSFTRAKMHADLIVAMGGRAAEQVIFGDDKTTSGAASDIKQATHLARSMVTKWGMSEKVGPLLYGEQNDPNNHILSIEMSNLIDSEVKQLITDALKEATKILNENIESLHRIAKALLEYETLTGQELSDLLEGKPFLKKTADDKKVVSKSSLDVEDDTVDKETLEKLESDLDTGDKE</sequence>
<reference key="1">
    <citation type="journal article" date="2009" name="Nucleic Acids Res.">
        <title>Analysis of complete genome sequence of Neorickettsia risticii: causative agent of Potomac horse fever.</title>
        <authorList>
            <person name="Lin M."/>
            <person name="Zhang C."/>
            <person name="Gibson K."/>
            <person name="Rikihisa Y."/>
        </authorList>
    </citation>
    <scope>NUCLEOTIDE SEQUENCE [LARGE SCALE GENOMIC DNA]</scope>
    <source>
        <strain>Illinois</strain>
    </source>
</reference>
<evidence type="ECO:0000255" key="1">
    <source>
        <dbReference type="HAMAP-Rule" id="MF_01458"/>
    </source>
</evidence>
<protein>
    <recommendedName>
        <fullName evidence="1">ATP-dependent zinc metalloprotease FtsH</fullName>
        <ecNumber evidence="1">3.4.24.-</ecNumber>
    </recommendedName>
</protein>